<proteinExistence type="inferred from homology"/>
<keyword id="KW-1003">Cell membrane</keyword>
<keyword id="KW-0406">Ion transport</keyword>
<keyword id="KW-0472">Membrane</keyword>
<keyword id="KW-0915">Sodium</keyword>
<keyword id="KW-0739">Sodium transport</keyword>
<keyword id="KW-1278">Translocase</keyword>
<keyword id="KW-0812">Transmembrane</keyword>
<keyword id="KW-1133">Transmembrane helix</keyword>
<keyword id="KW-0813">Transport</keyword>
<sequence length="85" mass="8969">MTNIGSLLVDAATLMVTGMAVVFIFLTILVYLVRLLSKLVPEEVPEPIAAPKTNTRVQSTSSAVSPQVVAAISAAIHQHRASIAK</sequence>
<organism>
    <name type="scientific">Vibrio parahaemolyticus serotype O3:K6 (strain RIMD 2210633)</name>
    <dbReference type="NCBI Taxonomy" id="223926"/>
    <lineage>
        <taxon>Bacteria</taxon>
        <taxon>Pseudomonadati</taxon>
        <taxon>Pseudomonadota</taxon>
        <taxon>Gammaproteobacteria</taxon>
        <taxon>Vibrionales</taxon>
        <taxon>Vibrionaceae</taxon>
        <taxon>Vibrio</taxon>
    </lineage>
</organism>
<name>OADG_VIBPA</name>
<reference key="1">
    <citation type="journal article" date="2003" name="Lancet">
        <title>Genome sequence of Vibrio parahaemolyticus: a pathogenic mechanism distinct from that of V. cholerae.</title>
        <authorList>
            <person name="Makino K."/>
            <person name="Oshima K."/>
            <person name="Kurokawa K."/>
            <person name="Yokoyama K."/>
            <person name="Uda T."/>
            <person name="Tagomori K."/>
            <person name="Iijima Y."/>
            <person name="Najima M."/>
            <person name="Nakano M."/>
            <person name="Yamashita A."/>
            <person name="Kubota Y."/>
            <person name="Kimura S."/>
            <person name="Yasunaga T."/>
            <person name="Honda T."/>
            <person name="Shinagawa H."/>
            <person name="Hattori M."/>
            <person name="Iida T."/>
        </authorList>
    </citation>
    <scope>NUCLEOTIDE SEQUENCE [LARGE SCALE GENOMIC DNA]</scope>
    <source>
        <strain>RIMD 2210633</strain>
    </source>
</reference>
<evidence type="ECO:0000255" key="1">
    <source>
        <dbReference type="HAMAP-Rule" id="MF_00404"/>
    </source>
</evidence>
<accession>Q87LR6</accession>
<dbReference type="EC" id="7.2.4.2" evidence="1"/>
<dbReference type="EMBL" id="BA000031">
    <property type="protein sequence ID" value="BAC60808.1"/>
    <property type="molecule type" value="Genomic_DNA"/>
</dbReference>
<dbReference type="RefSeq" id="NP_798924.1">
    <property type="nucleotide sequence ID" value="NC_004603.1"/>
</dbReference>
<dbReference type="RefSeq" id="WP_011106067.1">
    <property type="nucleotide sequence ID" value="NC_004603.1"/>
</dbReference>
<dbReference type="SMR" id="Q87LR6"/>
<dbReference type="GeneID" id="1190060"/>
<dbReference type="KEGG" id="vpa:VP2545"/>
<dbReference type="PATRIC" id="fig|223926.6.peg.2442"/>
<dbReference type="eggNOG" id="COG3630">
    <property type="taxonomic scope" value="Bacteria"/>
</dbReference>
<dbReference type="HOGENOM" id="CLU_168750_2_1_6"/>
<dbReference type="Proteomes" id="UP000002493">
    <property type="component" value="Chromosome 1"/>
</dbReference>
<dbReference type="GO" id="GO:0005886">
    <property type="term" value="C:plasma membrane"/>
    <property type="evidence" value="ECO:0007669"/>
    <property type="project" value="UniProtKB-SubCell"/>
</dbReference>
<dbReference type="GO" id="GO:0015451">
    <property type="term" value="F:decarboxylation-driven active transmembrane transporter activity"/>
    <property type="evidence" value="ECO:0007669"/>
    <property type="project" value="UniProtKB-EC"/>
</dbReference>
<dbReference type="GO" id="GO:0008948">
    <property type="term" value="F:oxaloacetate decarboxylase activity"/>
    <property type="evidence" value="ECO:0007669"/>
    <property type="project" value="UniProtKB-UniRule"/>
</dbReference>
<dbReference type="GO" id="GO:0015081">
    <property type="term" value="F:sodium ion transmembrane transporter activity"/>
    <property type="evidence" value="ECO:0007669"/>
    <property type="project" value="UniProtKB-UniRule"/>
</dbReference>
<dbReference type="GO" id="GO:0036376">
    <property type="term" value="P:sodium ion export across plasma membrane"/>
    <property type="evidence" value="ECO:0007669"/>
    <property type="project" value="InterPro"/>
</dbReference>
<dbReference type="HAMAP" id="MF_00404">
    <property type="entry name" value="OadG"/>
    <property type="match status" value="1"/>
</dbReference>
<dbReference type="InterPro" id="IPR005899">
    <property type="entry name" value="Na_pump_deCOase"/>
</dbReference>
<dbReference type="InterPro" id="IPR023424">
    <property type="entry name" value="OadG"/>
</dbReference>
<dbReference type="NCBIfam" id="TIGR01195">
    <property type="entry name" value="oadG_fam"/>
    <property type="match status" value="1"/>
</dbReference>
<dbReference type="NCBIfam" id="NF003004">
    <property type="entry name" value="PRK03814.1"/>
    <property type="match status" value="1"/>
</dbReference>
<dbReference type="Pfam" id="PF04277">
    <property type="entry name" value="OAD_gamma"/>
    <property type="match status" value="1"/>
</dbReference>
<comment type="function">
    <text evidence="1">Catalyzes the decarboxylation of oxaloacetate coupled to Na(+) translocation.</text>
</comment>
<comment type="catalytic activity">
    <reaction evidence="1">
        <text>oxaloacetate + 2 Na(+)(in) + H(+) = pyruvate + 2 Na(+)(out) + CO2</text>
        <dbReference type="Rhea" id="RHEA:57724"/>
        <dbReference type="ChEBI" id="CHEBI:15361"/>
        <dbReference type="ChEBI" id="CHEBI:15378"/>
        <dbReference type="ChEBI" id="CHEBI:16452"/>
        <dbReference type="ChEBI" id="CHEBI:16526"/>
        <dbReference type="ChEBI" id="CHEBI:29101"/>
        <dbReference type="EC" id="7.2.4.2"/>
    </reaction>
</comment>
<comment type="cofactor">
    <cofactor evidence="1">
        <name>Na(+)</name>
        <dbReference type="ChEBI" id="CHEBI:29101"/>
    </cofactor>
</comment>
<comment type="subunit">
    <text evidence="1">Heterotrimer of an alpha, a beta and a gamma subunit.</text>
</comment>
<comment type="subcellular location">
    <subcellularLocation>
        <location evidence="1">Cell membrane</location>
        <topology evidence="1">Single-pass membrane protein</topology>
    </subcellularLocation>
</comment>
<comment type="similarity">
    <text evidence="1">Belongs to the OadG family.</text>
</comment>
<gene>
    <name evidence="1" type="primary">oadG</name>
    <name type="ordered locus">VP2545</name>
</gene>
<protein>
    <recommendedName>
        <fullName evidence="1">Probable oxaloacetate decarboxylase gamma chain</fullName>
        <ecNumber evidence="1">7.2.4.2</ecNumber>
    </recommendedName>
</protein>
<feature type="chain" id="PRO_0000216463" description="Probable oxaloacetate decarboxylase gamma chain">
    <location>
        <begin position="1"/>
        <end position="85"/>
    </location>
</feature>
<feature type="transmembrane region" description="Helical" evidence="1">
    <location>
        <begin position="11"/>
        <end position="33"/>
    </location>
</feature>